<name>IROD_ECOL6</name>
<organism>
    <name type="scientific">Escherichia coli O6:H1 (strain CFT073 / ATCC 700928 / UPEC)</name>
    <dbReference type="NCBI Taxonomy" id="199310"/>
    <lineage>
        <taxon>Bacteria</taxon>
        <taxon>Pseudomonadati</taxon>
        <taxon>Pseudomonadota</taxon>
        <taxon>Gammaproteobacteria</taxon>
        <taxon>Enterobacterales</taxon>
        <taxon>Enterobacteriaceae</taxon>
        <taxon>Escherichia</taxon>
    </lineage>
</organism>
<reference key="1">
    <citation type="journal article" date="2002" name="Proc. Natl. Acad. Sci. U.S.A.">
        <title>Extensive mosaic structure revealed by the complete genome sequence of uropathogenic Escherichia coli.</title>
        <authorList>
            <person name="Welch R.A."/>
            <person name="Burland V."/>
            <person name="Plunkett G. III"/>
            <person name="Redford P."/>
            <person name="Roesch P."/>
            <person name="Rasko D."/>
            <person name="Buckles E.L."/>
            <person name="Liou S.-R."/>
            <person name="Boutin A."/>
            <person name="Hackett J."/>
            <person name="Stroud D."/>
            <person name="Mayhew G.F."/>
            <person name="Rose D.J."/>
            <person name="Zhou S."/>
            <person name="Schwartz D.C."/>
            <person name="Perna N.T."/>
            <person name="Mobley H.L.T."/>
            <person name="Donnenberg M.S."/>
            <person name="Blattner F.R."/>
        </authorList>
    </citation>
    <scope>NUCLEOTIDE SEQUENCE [LARGE SCALE GENOMIC DNA]</scope>
    <source>
        <strain>CFT073 / ATCC 700928 / UPEC</strain>
    </source>
</reference>
<reference key="2">
    <citation type="journal article" date="2005" name="J. Am. Chem. Soc.">
        <title>In vitro characterization of salmochelin and enterobactin trilactone hydrolases IroD, IroE, and Fes.</title>
        <authorList>
            <person name="Lin H."/>
            <person name="Fischbach M.A."/>
            <person name="Liu D.R."/>
            <person name="Walsh C.T."/>
        </authorList>
    </citation>
    <scope>FUNCTION</scope>
    <scope>CATALYTIC ACTIVITY</scope>
    <scope>BIOPHYSICOCHEMICAL PROPERTIES</scope>
    <scope>SUBCELLULAR LOCATION</scope>
    <source>
        <strain>CFT073 / ATCC 700928 / UPEC</strain>
    </source>
</reference>
<accession>A0A0H2V660</accession>
<feature type="chain" id="PRO_0000452106" description="Iron(III) salmochelin esterase">
    <location>
        <begin position="1"/>
        <end position="409"/>
    </location>
</feature>
<comment type="function">
    <text evidence="1">Catalyzes the hydrolysis of both the apo and Fe3(+)-bound forms of enterobactin (Ent), monoglucosyl-C-Ent (MGE), diglucosyl-C-Ent (DGE) and triglucosyl-C-Ent (TGE). Shows higher catalytic efficiencies on Fe3(+)-bound forms. The initial linear trimer products are, in turn, very good substrates for further hydrolytic cleavage by IroD, leading to complete degradation of the trilactone to DHB-Ser and/or Glc-DHB-Ser monomers. Hydrolyzes MGE and DGE regioselectively. May be the ferric MGE/DGE esterase responsible for cytoplasmic iron release.</text>
</comment>
<comment type="catalytic activity">
    <reaction evidence="1">
        <text>Fe(III)-C-5-deoxy-beta-D-glucosyl-enterobactin + H2O = Fe(III)-{di[N-(2,3-dihydroxybenzoyl)-L-seryl]-N-(C-5-[deoxy-beta-D-glucosyl]-2,3-dihydroxybenzoyl)-L-serine} + H(+)</text>
        <dbReference type="Rhea" id="RHEA:60392"/>
        <dbReference type="ChEBI" id="CHEBI:15377"/>
        <dbReference type="ChEBI" id="CHEBI:15378"/>
        <dbReference type="ChEBI" id="CHEBI:143772"/>
        <dbReference type="ChEBI" id="CHEBI:143774"/>
        <dbReference type="EC" id="3.1.1.109"/>
    </reaction>
</comment>
<comment type="catalytic activity">
    <reaction evidence="1">
        <text>Fe(III)-{di[N-(2,3-dihydroxybenzoyl)-L-seryl]-N-(C-5-[deoxy-beta-D-glucosyl]-2,3-dihydroxybenzoyl)-L-serine} + H2O + H(+) = Fe(III)-{N-(2,3-dihydroxybenzoyl)-L-seryl-N-(C-5-[deoxy-beta-D-glucosyl]-2,3-dihydroxybenzoyl)-L-serine} + N-(2,3-dihydroxybenzoyl)-L-serine</text>
        <dbReference type="Rhea" id="RHEA:60404"/>
        <dbReference type="ChEBI" id="CHEBI:15377"/>
        <dbReference type="ChEBI" id="CHEBI:15378"/>
        <dbReference type="ChEBI" id="CHEBI:58154"/>
        <dbReference type="ChEBI" id="CHEBI:143774"/>
        <dbReference type="ChEBI" id="CHEBI:143775"/>
        <dbReference type="EC" id="3.1.1.109"/>
    </reaction>
</comment>
<comment type="catalytic activity">
    <reaction evidence="1">
        <text>Fe(III)-{N-(2,3-dihydroxybenzoyl)-L-seryl-[N-(C-5-[deoxy-beta-D-glucosyl]-2,3-dihydroxybenzoyl)-L-serine]2} + H2O + H(+) = Fe(III)-{N-(2,3-dihydroxybenzoyl)-L-seryl-N-(C-5-[deoxy-beta-D-glucosyl]-2,3-dihydroxybenzoyl)-L-serine} + N-(C-5-[deoxy-beta-D-glucosyl]-2,3-dihydroxybenzoyl)-L-serine</text>
        <dbReference type="Rhea" id="RHEA:60400"/>
        <dbReference type="ChEBI" id="CHEBI:15377"/>
        <dbReference type="ChEBI" id="CHEBI:15378"/>
        <dbReference type="ChEBI" id="CHEBI:143773"/>
        <dbReference type="ChEBI" id="CHEBI:143775"/>
        <dbReference type="ChEBI" id="CHEBI:143778"/>
        <dbReference type="EC" id="3.1.1.109"/>
    </reaction>
</comment>
<comment type="catalytic activity">
    <reaction evidence="1">
        <text>Fe(III)-di(C-5-deoxy-beta-D-glucosyl)-enterobactin + H2O = Fe(III)-{N-(2,3-dihydroxybenzoyl)-L-seryl-[N-(C-5-[deoxy-beta-D-glucosyl]-2,3-dihydroxybenzoyl)-L-serine]2} + H(+)</text>
        <dbReference type="Rhea" id="RHEA:60388"/>
        <dbReference type="ChEBI" id="CHEBI:15377"/>
        <dbReference type="ChEBI" id="CHEBI:15378"/>
        <dbReference type="ChEBI" id="CHEBI:143771"/>
        <dbReference type="ChEBI" id="CHEBI:143773"/>
        <dbReference type="EC" id="3.1.1.109"/>
    </reaction>
</comment>
<comment type="catalytic activity">
    <reaction evidence="1">
        <text>Fe(III)-{N-(2,3-dihydroxybenzoyl)-L-seryl-[N-(C-5-[deoxy-beta-D-glucosyl]-2,3-dihydroxybenzoyl)-L-serine]2} + H2O + H(+) = Fe(III)-[N-(C-5-[deoxy-beta-D-glucosyl]-2,3-dihydroxybenzoyl)-L-serine]2 + N-(2,3-dihydroxybenzoyl)-L-serine</text>
        <dbReference type="Rhea" id="RHEA:60396"/>
        <dbReference type="ChEBI" id="CHEBI:15377"/>
        <dbReference type="ChEBI" id="CHEBI:15378"/>
        <dbReference type="ChEBI" id="CHEBI:58154"/>
        <dbReference type="ChEBI" id="CHEBI:143773"/>
        <dbReference type="ChEBI" id="CHEBI:143776"/>
        <dbReference type="EC" id="3.1.1.109"/>
    </reaction>
</comment>
<comment type="catalytic activity">
    <reaction evidence="1">
        <text>Fe(III)-[N-(C-5-[deoxy-beta-D-glucosyl]-2,3-dihydroxybenzoyl)-L-serine]2 + H2O + H(+) = Fe(III)-[N-(C-5-[deoxy-beta-D-glucosyl]-2,3-dihydroxybenzoyl)-L-serine] + N-(C-5-[deoxy-beta-D-glucosyl]-2,3-dihydroxybenzoyl)-L-serine</text>
        <dbReference type="Rhea" id="RHEA:60408"/>
        <dbReference type="ChEBI" id="CHEBI:15377"/>
        <dbReference type="ChEBI" id="CHEBI:15378"/>
        <dbReference type="ChEBI" id="CHEBI:143776"/>
        <dbReference type="ChEBI" id="CHEBI:143777"/>
        <dbReference type="ChEBI" id="CHEBI:143778"/>
        <dbReference type="EC" id="3.1.1.109"/>
    </reaction>
</comment>
<comment type="biophysicochemical properties">
    <kinetics>
        <KM evidence="1">40 uM for Ent</KM>
        <KM evidence="1">0.12 uM for Fe-Ent</KM>
        <KM evidence="1">60 uM for MGE</KM>
        <KM evidence="1">0.08 uM for Fe-MGE</KM>
        <KM evidence="1">120 uM for DGE</KM>
        <KM evidence="1">0.12 uM for Fe-DGE</KM>
        <KM evidence="1">160 uM for TGE</KM>
        <KM evidence="1">0.43 uM for Fe-TGE</KM>
        <text evidence="1">kcat is 1060 min(-1) with Ent as substrate. kcat is 74 min(-1) with Fe-Ent as substrate. kcat is 3720 min(-1) with MGE as substrate. kcat is 46 min(-1) with Fe-MGE as substrate. kcat is 6500 min(-1) with DGE as substrate. kcat is 32 min(-1) with Fe-DGE as substrate. kcat is 4460 min(-1) with TGE as substrate. kcat is 84 min(-1) with Fe-TGE as substrate.</text>
    </kinetics>
</comment>
<comment type="subcellular location">
    <subcellularLocation>
        <location evidence="4">Cytoplasm</location>
    </subcellularLocation>
</comment>
<comment type="similarity">
    <text evidence="3">Belongs to the Fes family.</text>
</comment>
<evidence type="ECO:0000269" key="1">
    <source>
    </source>
</evidence>
<evidence type="ECO:0000303" key="2">
    <source>
    </source>
</evidence>
<evidence type="ECO:0000305" key="3"/>
<evidence type="ECO:0000305" key="4">
    <source>
    </source>
</evidence>
<evidence type="ECO:0000312" key="5">
    <source>
        <dbReference type="EMBL" id="AAN79709.1"/>
    </source>
</evidence>
<proteinExistence type="evidence at protein level"/>
<sequence>MLNMQQHPSAIASLRNQLAAGHIANLTDFWREAESLNVPLVTPVEGAEDEREVTFLWRARHPLQGVYLRLNRVTDKEHVEKGMMSALPETDIWTLTLRLPASYCGSYSLLEIPPGTTAETIALSGGRFATLAGKADPLNKMPEINVRGNAKESVLTLDKAPALSEWNGGFHTGQLLTSMRIIAGKSRQVRLYIPDIDISQPLGLVVLPDGETWFDHLGVCAAIDAAINNRRIVPVAVLGIDNINEHERTEILGGRSKLIKDIAGHLLPMIRAEQPQRQWADRSRTVLAGQSLGGISALMGARYAPETFGLVLSHSPSMWWTPERTSRPGLFSETDTSWVSEHLLSAPPQGVRISLCVGSLEGSTVPHVQQLHQRLITAGVESHCAIYTGGHDYAWWRGALIDGIGLLQG</sequence>
<keyword id="KW-0963">Cytoplasm</keyword>
<keyword id="KW-0378">Hydrolase</keyword>
<keyword id="KW-1185">Reference proteome</keyword>
<protein>
    <recommendedName>
        <fullName evidence="3">Iron(III) salmochelin esterase</fullName>
        <ecNumber evidence="1">3.1.1.109</ecNumber>
    </recommendedName>
</protein>
<gene>
    <name evidence="2" type="primary">iroD</name>
    <name evidence="5" type="ordered locus">c1252</name>
</gene>
<dbReference type="EC" id="3.1.1.109" evidence="1"/>
<dbReference type="EMBL" id="AE014075">
    <property type="protein sequence ID" value="AAN79709.1"/>
    <property type="molecule type" value="Genomic_DNA"/>
</dbReference>
<dbReference type="RefSeq" id="WP_000933673.1">
    <property type="nucleotide sequence ID" value="NZ_CP051263.1"/>
</dbReference>
<dbReference type="SMR" id="A0A0H2V660"/>
<dbReference type="STRING" id="199310.c1252"/>
<dbReference type="ESTHER" id="ecoli-IROD">
    <property type="family name" value="A85-IroE-IroD-Fes-Yiel"/>
</dbReference>
<dbReference type="KEGG" id="ecc:c1252"/>
<dbReference type="eggNOG" id="COG2382">
    <property type="taxonomic scope" value="Bacteria"/>
</dbReference>
<dbReference type="HOGENOM" id="CLU_024314_3_0_6"/>
<dbReference type="BioCyc" id="MetaCyc:MONOMER-20652"/>
<dbReference type="BRENDA" id="3.1.1.109">
    <property type="organism ID" value="2026"/>
</dbReference>
<dbReference type="Proteomes" id="UP000001410">
    <property type="component" value="Chromosome"/>
</dbReference>
<dbReference type="GO" id="GO:0005737">
    <property type="term" value="C:cytoplasm"/>
    <property type="evidence" value="ECO:0007669"/>
    <property type="project" value="UniProtKB-SubCell"/>
</dbReference>
<dbReference type="GO" id="GO:0008849">
    <property type="term" value="F:enterochelin esterase activity"/>
    <property type="evidence" value="ECO:0007669"/>
    <property type="project" value="InterPro"/>
</dbReference>
<dbReference type="GO" id="GO:0005506">
    <property type="term" value="F:iron ion binding"/>
    <property type="evidence" value="ECO:0007669"/>
    <property type="project" value="InterPro"/>
</dbReference>
<dbReference type="GO" id="GO:0006826">
    <property type="term" value="P:iron ion transport"/>
    <property type="evidence" value="ECO:0007669"/>
    <property type="project" value="InterPro"/>
</dbReference>
<dbReference type="Gene3D" id="3.40.50.1820">
    <property type="entry name" value="alpha/beta hydrolase"/>
    <property type="match status" value="1"/>
</dbReference>
<dbReference type="Gene3D" id="2.60.40.10">
    <property type="entry name" value="Immunoglobulins"/>
    <property type="match status" value="1"/>
</dbReference>
<dbReference type="InterPro" id="IPR029058">
    <property type="entry name" value="AB_hydrolase_fold"/>
</dbReference>
<dbReference type="InterPro" id="IPR021764">
    <property type="entry name" value="Enterochelin_esterase_N"/>
</dbReference>
<dbReference type="InterPro" id="IPR000801">
    <property type="entry name" value="Esterase-like"/>
</dbReference>
<dbReference type="InterPro" id="IPR013783">
    <property type="entry name" value="Ig-like_fold"/>
</dbReference>
<dbReference type="InterPro" id="IPR014756">
    <property type="entry name" value="Ig_E-set"/>
</dbReference>
<dbReference type="InterPro" id="IPR050583">
    <property type="entry name" value="Mycobacterial_A85_antigen"/>
</dbReference>
<dbReference type="PANTHER" id="PTHR48098">
    <property type="entry name" value="ENTEROCHELIN ESTERASE-RELATED"/>
    <property type="match status" value="1"/>
</dbReference>
<dbReference type="PANTHER" id="PTHR48098:SF3">
    <property type="entry name" value="IRON(III) ENTEROBACTIN ESTERASE"/>
    <property type="match status" value="1"/>
</dbReference>
<dbReference type="Pfam" id="PF11806">
    <property type="entry name" value="Enterochelin_N"/>
    <property type="match status" value="1"/>
</dbReference>
<dbReference type="Pfam" id="PF00756">
    <property type="entry name" value="Esterase"/>
    <property type="match status" value="1"/>
</dbReference>
<dbReference type="SUPFAM" id="SSF53474">
    <property type="entry name" value="alpha/beta-Hydrolases"/>
    <property type="match status" value="1"/>
</dbReference>
<dbReference type="SUPFAM" id="SSF81296">
    <property type="entry name" value="E set domains"/>
    <property type="match status" value="1"/>
</dbReference>